<keyword id="KW-0030">Aminoacyl-tRNA synthetase</keyword>
<keyword id="KW-0067">ATP-binding</keyword>
<keyword id="KW-0963">Cytoplasm</keyword>
<keyword id="KW-0436">Ligase</keyword>
<keyword id="KW-0547">Nucleotide-binding</keyword>
<keyword id="KW-0648">Protein biosynthesis</keyword>
<keyword id="KW-1185">Reference proteome</keyword>
<organism>
    <name type="scientific">Nitrosospira multiformis (strain ATCC 25196 / NCIMB 11849 / C 71)</name>
    <dbReference type="NCBI Taxonomy" id="323848"/>
    <lineage>
        <taxon>Bacteria</taxon>
        <taxon>Pseudomonadati</taxon>
        <taxon>Pseudomonadota</taxon>
        <taxon>Betaproteobacteria</taxon>
        <taxon>Nitrosomonadales</taxon>
        <taxon>Nitrosomonadaceae</taxon>
        <taxon>Nitrosospira</taxon>
    </lineage>
</organism>
<sequence>MRASGFFISTLKEAPAEAELISHKLMLRAGIIRRLGSGLYTWMPLGLKVLRKVENIVREEMDAAGALELLMPAVQPAELWRETGRWDVFGPQMLKIRDRHERDFCFGPTHEEVITDIARREIKSYRQLPLNFYQIQTKFRDEVRPRFGVMRAREFVMKDAYSFHTDIPSLEETYQAMHVAYCRIFDRLGLKFRPVKADTGAIGGSSSHEFHVLADSGEDAIAFCSDSDYAANVEMAESLPPAGLREAAAGEMQKVRTIAQKTCEEVAAYLNVSIEQTVKTLAVMANGGMHLLLLRGDHHLNETKVRKIPFLSDFRLASEEEIRTETGCLPGFIGPAGLSLPVIADLTVATMSNFVCGANEEDYHLVNVNFGRDLKEPDHVFDIRNVVSGDLSPDGKGKLEICRGIEVGHIFQLLTKYSEAMKANYLDESGQARPMEMGCYGIGVSRIVAAAIEQNHDERGIIFPAAMAPFQVVIIPIGLKKNAEVRAEAEKLYATLSSVGIEVLLDDRDDRPGVMFADMELIGIPHRVVVGERGLKEGNAEYRGRRDEKSEVVPLPEIADFIKSKLAGG</sequence>
<proteinExistence type="inferred from homology"/>
<feature type="chain" id="PRO_0000248731" description="Proline--tRNA ligase">
    <location>
        <begin position="1"/>
        <end position="569"/>
    </location>
</feature>
<name>SYP_NITMU</name>
<gene>
    <name evidence="1" type="primary">proS</name>
    <name type="ordered locus">Nmul_A0450</name>
</gene>
<comment type="function">
    <text evidence="1">Catalyzes the attachment of proline to tRNA(Pro) in a two-step reaction: proline is first activated by ATP to form Pro-AMP and then transferred to the acceptor end of tRNA(Pro). As ProRS can inadvertently accommodate and process non-cognate amino acids such as alanine and cysteine, to avoid such errors it has two additional distinct editing activities against alanine. One activity is designated as 'pretransfer' editing and involves the tRNA(Pro)-independent hydrolysis of activated Ala-AMP. The other activity is designated 'posttransfer' editing and involves deacylation of mischarged Ala-tRNA(Pro). The misacylated Cys-tRNA(Pro) is not edited by ProRS.</text>
</comment>
<comment type="catalytic activity">
    <reaction evidence="1">
        <text>tRNA(Pro) + L-proline + ATP = L-prolyl-tRNA(Pro) + AMP + diphosphate</text>
        <dbReference type="Rhea" id="RHEA:14305"/>
        <dbReference type="Rhea" id="RHEA-COMP:9700"/>
        <dbReference type="Rhea" id="RHEA-COMP:9702"/>
        <dbReference type="ChEBI" id="CHEBI:30616"/>
        <dbReference type="ChEBI" id="CHEBI:33019"/>
        <dbReference type="ChEBI" id="CHEBI:60039"/>
        <dbReference type="ChEBI" id="CHEBI:78442"/>
        <dbReference type="ChEBI" id="CHEBI:78532"/>
        <dbReference type="ChEBI" id="CHEBI:456215"/>
        <dbReference type="EC" id="6.1.1.15"/>
    </reaction>
</comment>
<comment type="subunit">
    <text evidence="1">Homodimer.</text>
</comment>
<comment type="subcellular location">
    <subcellularLocation>
        <location evidence="1">Cytoplasm</location>
    </subcellularLocation>
</comment>
<comment type="domain">
    <text evidence="1">Consists of three domains: the N-terminal catalytic domain, the editing domain and the C-terminal anticodon-binding domain.</text>
</comment>
<comment type="similarity">
    <text evidence="1">Belongs to the class-II aminoacyl-tRNA synthetase family. ProS type 1 subfamily.</text>
</comment>
<reference key="1">
    <citation type="submission" date="2005-08" db="EMBL/GenBank/DDBJ databases">
        <title>Complete sequence of chromosome 1 of Nitrosospira multiformis ATCC 25196.</title>
        <authorList>
            <person name="Copeland A."/>
            <person name="Lucas S."/>
            <person name="Lapidus A."/>
            <person name="Barry K."/>
            <person name="Detter J.C."/>
            <person name="Glavina T."/>
            <person name="Hammon N."/>
            <person name="Israni S."/>
            <person name="Pitluck S."/>
            <person name="Chain P."/>
            <person name="Malfatti S."/>
            <person name="Shin M."/>
            <person name="Vergez L."/>
            <person name="Schmutz J."/>
            <person name="Larimer F."/>
            <person name="Land M."/>
            <person name="Hauser L."/>
            <person name="Kyrpides N."/>
            <person name="Lykidis A."/>
            <person name="Richardson P."/>
        </authorList>
    </citation>
    <scope>NUCLEOTIDE SEQUENCE [LARGE SCALE GENOMIC DNA]</scope>
    <source>
        <strain>ATCC 25196 / NCIMB 11849 / C 71</strain>
    </source>
</reference>
<dbReference type="EC" id="6.1.1.15" evidence="1"/>
<dbReference type="EMBL" id="CP000103">
    <property type="protein sequence ID" value="ABB73758.1"/>
    <property type="molecule type" value="Genomic_DNA"/>
</dbReference>
<dbReference type="RefSeq" id="WP_011379812.1">
    <property type="nucleotide sequence ID" value="NC_007614.1"/>
</dbReference>
<dbReference type="SMR" id="Q2YBW3"/>
<dbReference type="STRING" id="323848.Nmul_A0450"/>
<dbReference type="KEGG" id="nmu:Nmul_A0450"/>
<dbReference type="eggNOG" id="COG0442">
    <property type="taxonomic scope" value="Bacteria"/>
</dbReference>
<dbReference type="HOGENOM" id="CLU_016739_0_0_4"/>
<dbReference type="OrthoDB" id="9809052at2"/>
<dbReference type="Proteomes" id="UP000002718">
    <property type="component" value="Chromosome"/>
</dbReference>
<dbReference type="GO" id="GO:0005829">
    <property type="term" value="C:cytosol"/>
    <property type="evidence" value="ECO:0007669"/>
    <property type="project" value="TreeGrafter"/>
</dbReference>
<dbReference type="GO" id="GO:0002161">
    <property type="term" value="F:aminoacyl-tRNA deacylase activity"/>
    <property type="evidence" value="ECO:0007669"/>
    <property type="project" value="InterPro"/>
</dbReference>
<dbReference type="GO" id="GO:0005524">
    <property type="term" value="F:ATP binding"/>
    <property type="evidence" value="ECO:0007669"/>
    <property type="project" value="UniProtKB-UniRule"/>
</dbReference>
<dbReference type="GO" id="GO:0004827">
    <property type="term" value="F:proline-tRNA ligase activity"/>
    <property type="evidence" value="ECO:0007669"/>
    <property type="project" value="UniProtKB-UniRule"/>
</dbReference>
<dbReference type="GO" id="GO:0006433">
    <property type="term" value="P:prolyl-tRNA aminoacylation"/>
    <property type="evidence" value="ECO:0007669"/>
    <property type="project" value="UniProtKB-UniRule"/>
</dbReference>
<dbReference type="CDD" id="cd04334">
    <property type="entry name" value="ProRS-INS"/>
    <property type="match status" value="1"/>
</dbReference>
<dbReference type="CDD" id="cd00861">
    <property type="entry name" value="ProRS_anticodon_short"/>
    <property type="match status" value="1"/>
</dbReference>
<dbReference type="CDD" id="cd00779">
    <property type="entry name" value="ProRS_core_prok"/>
    <property type="match status" value="1"/>
</dbReference>
<dbReference type="FunFam" id="3.30.930.10:FF:000043">
    <property type="entry name" value="Proline--tRNA ligase"/>
    <property type="match status" value="1"/>
</dbReference>
<dbReference type="FunFam" id="3.30.930.10:FF:000097">
    <property type="entry name" value="Proline--tRNA ligase"/>
    <property type="match status" value="1"/>
</dbReference>
<dbReference type="Gene3D" id="3.40.50.800">
    <property type="entry name" value="Anticodon-binding domain"/>
    <property type="match status" value="1"/>
</dbReference>
<dbReference type="Gene3D" id="3.30.930.10">
    <property type="entry name" value="Bira Bifunctional Protein, Domain 2"/>
    <property type="match status" value="2"/>
</dbReference>
<dbReference type="Gene3D" id="3.90.960.10">
    <property type="entry name" value="YbaK/aminoacyl-tRNA synthetase-associated domain"/>
    <property type="match status" value="1"/>
</dbReference>
<dbReference type="HAMAP" id="MF_01569">
    <property type="entry name" value="Pro_tRNA_synth_type1"/>
    <property type="match status" value="1"/>
</dbReference>
<dbReference type="InterPro" id="IPR002314">
    <property type="entry name" value="aa-tRNA-synt_IIb"/>
</dbReference>
<dbReference type="InterPro" id="IPR006195">
    <property type="entry name" value="aa-tRNA-synth_II"/>
</dbReference>
<dbReference type="InterPro" id="IPR045864">
    <property type="entry name" value="aa-tRNA-synth_II/BPL/LPL"/>
</dbReference>
<dbReference type="InterPro" id="IPR004154">
    <property type="entry name" value="Anticodon-bd"/>
</dbReference>
<dbReference type="InterPro" id="IPR036621">
    <property type="entry name" value="Anticodon-bd_dom_sf"/>
</dbReference>
<dbReference type="InterPro" id="IPR002316">
    <property type="entry name" value="Pro-tRNA-ligase_IIa"/>
</dbReference>
<dbReference type="InterPro" id="IPR004500">
    <property type="entry name" value="Pro-tRNA-synth_IIa_bac-type"/>
</dbReference>
<dbReference type="InterPro" id="IPR023717">
    <property type="entry name" value="Pro-tRNA-Synthase_IIa_type1"/>
</dbReference>
<dbReference type="InterPro" id="IPR050062">
    <property type="entry name" value="Pro-tRNA_synthetase"/>
</dbReference>
<dbReference type="InterPro" id="IPR044140">
    <property type="entry name" value="ProRS_anticodon_short"/>
</dbReference>
<dbReference type="InterPro" id="IPR033730">
    <property type="entry name" value="ProRS_core_prok"/>
</dbReference>
<dbReference type="InterPro" id="IPR036754">
    <property type="entry name" value="YbaK/aa-tRNA-synt-asso_dom_sf"/>
</dbReference>
<dbReference type="InterPro" id="IPR007214">
    <property type="entry name" value="YbaK/aa-tRNA-synth-assoc-dom"/>
</dbReference>
<dbReference type="NCBIfam" id="NF006625">
    <property type="entry name" value="PRK09194.1"/>
    <property type="match status" value="1"/>
</dbReference>
<dbReference type="NCBIfam" id="TIGR00409">
    <property type="entry name" value="proS_fam_II"/>
    <property type="match status" value="1"/>
</dbReference>
<dbReference type="PANTHER" id="PTHR42753">
    <property type="entry name" value="MITOCHONDRIAL RIBOSOME PROTEIN L39/PROLYL-TRNA LIGASE FAMILY MEMBER"/>
    <property type="match status" value="1"/>
</dbReference>
<dbReference type="PANTHER" id="PTHR42753:SF2">
    <property type="entry name" value="PROLINE--TRNA LIGASE"/>
    <property type="match status" value="1"/>
</dbReference>
<dbReference type="Pfam" id="PF03129">
    <property type="entry name" value="HGTP_anticodon"/>
    <property type="match status" value="1"/>
</dbReference>
<dbReference type="Pfam" id="PF00587">
    <property type="entry name" value="tRNA-synt_2b"/>
    <property type="match status" value="1"/>
</dbReference>
<dbReference type="Pfam" id="PF04073">
    <property type="entry name" value="tRNA_edit"/>
    <property type="match status" value="1"/>
</dbReference>
<dbReference type="PIRSF" id="PIRSF001535">
    <property type="entry name" value="ProRS_1"/>
    <property type="match status" value="1"/>
</dbReference>
<dbReference type="PRINTS" id="PR01046">
    <property type="entry name" value="TRNASYNTHPRO"/>
</dbReference>
<dbReference type="SUPFAM" id="SSF52954">
    <property type="entry name" value="Class II aaRS ABD-related"/>
    <property type="match status" value="1"/>
</dbReference>
<dbReference type="SUPFAM" id="SSF55681">
    <property type="entry name" value="Class II aaRS and biotin synthetases"/>
    <property type="match status" value="1"/>
</dbReference>
<dbReference type="SUPFAM" id="SSF55826">
    <property type="entry name" value="YbaK/ProRS associated domain"/>
    <property type="match status" value="1"/>
</dbReference>
<dbReference type="PROSITE" id="PS50862">
    <property type="entry name" value="AA_TRNA_LIGASE_II"/>
    <property type="match status" value="1"/>
</dbReference>
<evidence type="ECO:0000255" key="1">
    <source>
        <dbReference type="HAMAP-Rule" id="MF_01569"/>
    </source>
</evidence>
<protein>
    <recommendedName>
        <fullName evidence="1">Proline--tRNA ligase</fullName>
        <ecNumber evidence="1">6.1.1.15</ecNumber>
    </recommendedName>
    <alternativeName>
        <fullName evidence="1">Prolyl-tRNA synthetase</fullName>
        <shortName evidence="1">ProRS</shortName>
    </alternativeName>
</protein>
<accession>Q2YBW3</accession>